<evidence type="ECO:0000250" key="1">
    <source>
        <dbReference type="UniProtKB" id="P83881"/>
    </source>
</evidence>
<evidence type="ECO:0000256" key="2">
    <source>
        <dbReference type="SAM" id="MobiDB-lite"/>
    </source>
</evidence>
<evidence type="ECO:0000305" key="3"/>
<proteinExistence type="inferred from homology"/>
<sequence length="106" mass="12441">MVNVPKTRRTFCKKCGKHQPHKVTQYKKGKDSLYAQGKRRYDRKQSGYGGQTKPIFRKKAKTTKKIVLRLECVEPNCRSKRMLAIKRCKHFELGGDKKRKGQVIQF</sequence>
<reference key="1">
    <citation type="submission" date="2007-06" db="EMBL/GenBank/DDBJ databases">
        <authorList>
            <consortium name="NIH - Mammalian Gene Collection (MGC) project"/>
        </authorList>
    </citation>
    <scope>NUCLEOTIDE SEQUENCE [LARGE SCALE MRNA]</scope>
    <source>
        <strain>Hereford</strain>
        <tissue>Heart ventricle</tissue>
        <tissue>Thymus</tissue>
    </source>
</reference>
<feature type="chain" id="PRO_0000240155" description="Large ribosomal subunit protein eL42">
    <location>
        <begin position="1"/>
        <end position="106"/>
    </location>
</feature>
<feature type="region of interest" description="Disordered" evidence="2">
    <location>
        <begin position="34"/>
        <end position="53"/>
    </location>
</feature>
<dbReference type="EMBL" id="BC103119">
    <property type="protein sequence ID" value="AAI03120.1"/>
    <property type="molecule type" value="mRNA"/>
</dbReference>
<dbReference type="EMBL" id="BC142008">
    <property type="protein sequence ID" value="AAI42009.1"/>
    <property type="molecule type" value="mRNA"/>
</dbReference>
<dbReference type="RefSeq" id="NP_001029488.1">
    <property type="nucleotide sequence ID" value="NM_001034316.2"/>
</dbReference>
<dbReference type="RefSeq" id="XP_015328638.1">
    <property type="nucleotide sequence ID" value="XM_015473152.1"/>
</dbReference>
<dbReference type="SMR" id="Q3SZ59"/>
<dbReference type="FunCoup" id="Q3SZ59">
    <property type="interactions" value="2677"/>
</dbReference>
<dbReference type="STRING" id="9913.ENSBTAP00000020267"/>
<dbReference type="PaxDb" id="9913-ENSBTAP00000020267"/>
<dbReference type="GeneID" id="508165"/>
<dbReference type="KEGG" id="bta:508165"/>
<dbReference type="CTD" id="6173"/>
<dbReference type="VEuPathDB" id="HostDB:ENSBTAG00000019253"/>
<dbReference type="VEuPathDB" id="HostDB:ENSBTAG00000025564"/>
<dbReference type="VEuPathDB" id="HostDB:ENSBTAG00000027610"/>
<dbReference type="eggNOG" id="KOG3464">
    <property type="taxonomic scope" value="Eukaryota"/>
</dbReference>
<dbReference type="HOGENOM" id="CLU_114645_2_1_1"/>
<dbReference type="InParanoid" id="Q3SZ59"/>
<dbReference type="OMA" id="CKKHTIH"/>
<dbReference type="OrthoDB" id="2967263at2759"/>
<dbReference type="TreeFam" id="TF300213"/>
<dbReference type="Reactome" id="R-BTA-156827">
    <property type="pathway name" value="L13a-mediated translational silencing of Ceruloplasmin expression"/>
</dbReference>
<dbReference type="Reactome" id="R-BTA-1799339">
    <property type="pathway name" value="SRP-dependent cotranslational protein targeting to membrane"/>
</dbReference>
<dbReference type="Reactome" id="R-BTA-6791226">
    <property type="pathway name" value="Major pathway of rRNA processing in the nucleolus and cytosol"/>
</dbReference>
<dbReference type="Reactome" id="R-BTA-72689">
    <property type="pathway name" value="Formation of a pool of free 40S subunits"/>
</dbReference>
<dbReference type="Reactome" id="R-BTA-72706">
    <property type="pathway name" value="GTP hydrolysis and joining of the 60S ribosomal subunit"/>
</dbReference>
<dbReference type="Reactome" id="R-BTA-975956">
    <property type="pathway name" value="Nonsense Mediated Decay (NMD) independent of the Exon Junction Complex (EJC)"/>
</dbReference>
<dbReference type="Reactome" id="R-BTA-975957">
    <property type="pathway name" value="Nonsense Mediated Decay (NMD) enhanced by the Exon Junction Complex (EJC)"/>
</dbReference>
<dbReference type="Proteomes" id="UP000009136">
    <property type="component" value="Chromosome 10"/>
</dbReference>
<dbReference type="Proteomes" id="UP000009136">
    <property type="component" value="Chromosome X"/>
</dbReference>
<dbReference type="Bgee" id="ENSBTAG00000019253">
    <property type="expression patterns" value="Expressed in vas deferens and 103 other cell types or tissues"/>
</dbReference>
<dbReference type="GO" id="GO:0022625">
    <property type="term" value="C:cytosolic large ribosomal subunit"/>
    <property type="evidence" value="ECO:0000318"/>
    <property type="project" value="GO_Central"/>
</dbReference>
<dbReference type="GO" id="GO:0003735">
    <property type="term" value="F:structural constituent of ribosome"/>
    <property type="evidence" value="ECO:0007669"/>
    <property type="project" value="InterPro"/>
</dbReference>
<dbReference type="GO" id="GO:0006412">
    <property type="term" value="P:translation"/>
    <property type="evidence" value="ECO:0007669"/>
    <property type="project" value="InterPro"/>
</dbReference>
<dbReference type="FunFam" id="3.10.450.80:FF:000001">
    <property type="entry name" value="60S ribosomal protein L44"/>
    <property type="match status" value="1"/>
</dbReference>
<dbReference type="Gene3D" id="3.10.450.80">
    <property type="match status" value="1"/>
</dbReference>
<dbReference type="InterPro" id="IPR000552">
    <property type="entry name" value="Ribosomal_eL44"/>
</dbReference>
<dbReference type="InterPro" id="IPR053708">
    <property type="entry name" value="Ribosomal_LSU_eL42"/>
</dbReference>
<dbReference type="InterPro" id="IPR011332">
    <property type="entry name" value="Ribosomal_zn-bd"/>
</dbReference>
<dbReference type="PANTHER" id="PTHR10369">
    <property type="entry name" value="60S RIBOSOMAL PROTEIN L36A/L44"/>
    <property type="match status" value="1"/>
</dbReference>
<dbReference type="Pfam" id="PF00935">
    <property type="entry name" value="Ribosomal_L44"/>
    <property type="match status" value="1"/>
</dbReference>
<dbReference type="SUPFAM" id="SSF57829">
    <property type="entry name" value="Zn-binding ribosomal proteins"/>
    <property type="match status" value="1"/>
</dbReference>
<dbReference type="PROSITE" id="PS01172">
    <property type="entry name" value="RIBOSOMAL_L44E"/>
    <property type="match status" value="1"/>
</dbReference>
<organism>
    <name type="scientific">Bos taurus</name>
    <name type="common">Bovine</name>
    <dbReference type="NCBI Taxonomy" id="9913"/>
    <lineage>
        <taxon>Eukaryota</taxon>
        <taxon>Metazoa</taxon>
        <taxon>Chordata</taxon>
        <taxon>Craniata</taxon>
        <taxon>Vertebrata</taxon>
        <taxon>Euteleostomi</taxon>
        <taxon>Mammalia</taxon>
        <taxon>Eutheria</taxon>
        <taxon>Laurasiatheria</taxon>
        <taxon>Artiodactyla</taxon>
        <taxon>Ruminantia</taxon>
        <taxon>Pecora</taxon>
        <taxon>Bovidae</taxon>
        <taxon>Bovinae</taxon>
        <taxon>Bos</taxon>
    </lineage>
</organism>
<keyword id="KW-0963">Cytoplasm</keyword>
<keyword id="KW-1185">Reference proteome</keyword>
<keyword id="KW-0687">Ribonucleoprotein</keyword>
<keyword id="KW-0689">Ribosomal protein</keyword>
<gene>
    <name type="primary">RPL36A</name>
</gene>
<name>RL36A_BOVIN</name>
<comment type="function">
    <text evidence="1">Component of the large ribosomal subunit. The ribosome is a large ribonucleoprotein complex responsible for the synthesis of proteins in the cell.</text>
</comment>
<comment type="subunit">
    <text evidence="1">Component of the large ribosomal subunit.</text>
</comment>
<comment type="subcellular location">
    <subcellularLocation>
        <location evidence="1">Cytoplasm</location>
    </subcellularLocation>
</comment>
<comment type="similarity">
    <text evidence="3">Belongs to the eukaryotic ribosomal protein eL42 family.</text>
</comment>
<accession>Q3SZ59</accession>
<accession>A5PJ89</accession>
<protein>
    <recommendedName>
        <fullName evidence="3">Large ribosomal subunit protein eL42</fullName>
    </recommendedName>
    <alternativeName>
        <fullName>60S ribosomal protein L36a</fullName>
    </alternativeName>
</protein>